<comment type="function">
    <text evidence="1">DNA polymerase III is a complex, multichain enzyme responsible for most of the replicative synthesis in bacteria. This DNA polymerase also exhibits 3' to 5' exonuclease activity. The alpha chain is the DNA polymerase (By similarity).</text>
</comment>
<comment type="catalytic activity">
    <reaction>
        <text>DNA(n) + a 2'-deoxyribonucleoside 5'-triphosphate = DNA(n+1) + diphosphate</text>
        <dbReference type="Rhea" id="RHEA:22508"/>
        <dbReference type="Rhea" id="RHEA-COMP:17339"/>
        <dbReference type="Rhea" id="RHEA-COMP:17340"/>
        <dbReference type="ChEBI" id="CHEBI:33019"/>
        <dbReference type="ChEBI" id="CHEBI:61560"/>
        <dbReference type="ChEBI" id="CHEBI:173112"/>
        <dbReference type="EC" id="2.7.7.7"/>
    </reaction>
</comment>
<comment type="subunit">
    <text evidence="1">DNA polymerase III contains a core (composed of alpha, epsilon and theta chains) that associates with a tau subunit. This core dimerizes to form the PolIII' complex. PolIII' associates with the gamma complex (composed of gamma, delta, delta', psi and chi chains) and with the beta chain to form the complete DNA polymerase III complex (By similarity).</text>
</comment>
<comment type="subcellular location">
    <subcellularLocation>
        <location evidence="1">Cytoplasm</location>
    </subcellularLocation>
</comment>
<comment type="similarity">
    <text evidence="2">Belongs to the DNA polymerase type-C family. DnaE subfamily.</text>
</comment>
<keyword id="KW-0963">Cytoplasm</keyword>
<keyword id="KW-0235">DNA replication</keyword>
<keyword id="KW-0239">DNA-directed DNA polymerase</keyword>
<keyword id="KW-0548">Nucleotidyltransferase</keyword>
<keyword id="KW-1185">Reference proteome</keyword>
<keyword id="KW-0808">Transferase</keyword>
<evidence type="ECO:0000250" key="1"/>
<evidence type="ECO:0000305" key="2"/>
<gene>
    <name type="primary">dnaE1</name>
    <name type="synonym">dnaE</name>
    <name type="ordered locus">MT1598</name>
</gene>
<sequence>MSGSSAGSSFVHLHNHTEYSMLDGAAKITPMLAEVERLGMPAVGMTDHGNMFGASEFYNSATKAGIKPIIGVEAYIAPGSRFDTRRILWGDPSQKADDVSGSGSYTHLTMMAENATGLRNLFKLSSHASFEGQLSKWSRMDAELIAEHAEGIIITTGCPSGEVQTRLRLGQDREALEAAAKWREIVGPDNYFLELMDHGLTIERRVRDGLLEIGRALNIPPLATNDCHYVTRDAAHNHEALLCVQTGKTLSDPNRFKFDGDGYYLKSAAEMRQIWDDEVPGACDSTLLIAERVQSYADVWTPRDRMPVFPVPDGHDQASWLRHEVDAGLRRRFPAGPPDGYRERAAYEIDVICSKGFPSYFLIVADLISYARSAGIRVGPGRGSAAGSLVAYALGITDIDPIPHGLLFERFLNPERTSMPDIDIDFDDRRRGEMVRYAADKWGHDRVAQVITFGTIKTKAALKDSARIHYGQPGFAIADRITKALPPAIMAKDIPLSGITDPSHERYKEAAEVRGLIETDPDVRTIYQTARGLEGLIRNAGVHACAVIMSSEPLTEAIPLWKRPQDGAIITGWDYPACEAIGLLKMDFLGLRNLTIIGDAIDNVRANRGIDLDLESVPLDDKATYELLGRGDTLGVFQLDGGPMRDLLRRMQPTGFEDVVAVIALYRPGPMGMNAHNDYADRKNNRQAIKPIHPELEEPLREILAETYGLIVYQEQIMRIAQKVASYSLARADILRKAMGKKKREVLEKEFEGFSDGMQANGFSPAAIKALWDTILPFADYAFNKSHAAGYGMVSYWTAYLKANYPAEYMAGLLTSVGDDKDKAAVYLADCRKLGITVLPPDVNESGLNFASVGQDIRYGLGAVRNVGANVVGSLLQTRNDKGKFTDFSDYLNKIDISACNKKVTESLIKAGAFDSLGHARKGLFLVHSDAVDSVLGTKKAEALGQFDLFGSNDDGTGTADPVFTIKVPDDEWEDKHKLALEREMLGLYVSGHPLNGVAHLLAAQVDTAIPAILDGDVPNDAQVRVGGILASVNRRVNKNGMPWASAQLEDLTGGIEVMFFPHTYSSYGADIVDDAVVLVNAKVAVRDDRIALIANDLTVPDFSNAEVERPLAVSLPTRQCTFDKVSALKQVLARHPGTSQVHLRLISGDRITTLALDQSLRVTPSPALMGDLKELLGPGCLGS</sequence>
<protein>
    <recommendedName>
        <fullName>DNA polymerase III subunit alpha</fullName>
        <ecNumber>2.7.7.7</ecNumber>
    </recommendedName>
</protein>
<name>DPO3A_MYCTO</name>
<feature type="chain" id="PRO_0000427070" description="DNA polymerase III subunit alpha">
    <location>
        <begin position="1"/>
        <end position="1184"/>
    </location>
</feature>
<proteinExistence type="inferred from homology"/>
<reference key="1">
    <citation type="journal article" date="2002" name="J. Bacteriol.">
        <title>Whole-genome comparison of Mycobacterium tuberculosis clinical and laboratory strains.</title>
        <authorList>
            <person name="Fleischmann R.D."/>
            <person name="Alland D."/>
            <person name="Eisen J.A."/>
            <person name="Carpenter L."/>
            <person name="White O."/>
            <person name="Peterson J.D."/>
            <person name="DeBoy R.T."/>
            <person name="Dodson R.J."/>
            <person name="Gwinn M.L."/>
            <person name="Haft D.H."/>
            <person name="Hickey E.K."/>
            <person name="Kolonay J.F."/>
            <person name="Nelson W.C."/>
            <person name="Umayam L.A."/>
            <person name="Ermolaeva M.D."/>
            <person name="Salzberg S.L."/>
            <person name="Delcher A."/>
            <person name="Utterback T.R."/>
            <person name="Weidman J.F."/>
            <person name="Khouri H.M."/>
            <person name="Gill J."/>
            <person name="Mikula A."/>
            <person name="Bishai W."/>
            <person name="Jacobs W.R. Jr."/>
            <person name="Venter J.C."/>
            <person name="Fraser C.M."/>
        </authorList>
    </citation>
    <scope>NUCLEOTIDE SEQUENCE [LARGE SCALE GENOMIC DNA]</scope>
    <source>
        <strain>CDC 1551 / Oshkosh</strain>
    </source>
</reference>
<dbReference type="EC" id="2.7.7.7"/>
<dbReference type="EMBL" id="AE000516">
    <property type="protein sequence ID" value="AAK45865.1"/>
    <property type="molecule type" value="Genomic_DNA"/>
</dbReference>
<dbReference type="PIR" id="H70761">
    <property type="entry name" value="H70761"/>
</dbReference>
<dbReference type="RefSeq" id="WP_003407751.1">
    <property type="nucleotide sequence ID" value="NZ_KK341227.1"/>
</dbReference>
<dbReference type="SMR" id="P9WNT6"/>
<dbReference type="KEGG" id="mtc:MT1598"/>
<dbReference type="PATRIC" id="fig|83331.31.peg.1719"/>
<dbReference type="HOGENOM" id="CLU_001600_0_0_11"/>
<dbReference type="Proteomes" id="UP000001020">
    <property type="component" value="Chromosome"/>
</dbReference>
<dbReference type="GO" id="GO:0005737">
    <property type="term" value="C:cytoplasm"/>
    <property type="evidence" value="ECO:0007669"/>
    <property type="project" value="UniProtKB-SubCell"/>
</dbReference>
<dbReference type="GO" id="GO:0008408">
    <property type="term" value="F:3'-5' exonuclease activity"/>
    <property type="evidence" value="ECO:0007669"/>
    <property type="project" value="InterPro"/>
</dbReference>
<dbReference type="GO" id="GO:0003887">
    <property type="term" value="F:DNA-directed DNA polymerase activity"/>
    <property type="evidence" value="ECO:0007669"/>
    <property type="project" value="UniProtKB-KW"/>
</dbReference>
<dbReference type="GO" id="GO:0003676">
    <property type="term" value="F:nucleic acid binding"/>
    <property type="evidence" value="ECO:0007669"/>
    <property type="project" value="InterPro"/>
</dbReference>
<dbReference type="GO" id="GO:0006260">
    <property type="term" value="P:DNA replication"/>
    <property type="evidence" value="ECO:0007669"/>
    <property type="project" value="UniProtKB-KW"/>
</dbReference>
<dbReference type="CDD" id="cd04485">
    <property type="entry name" value="DnaE_OBF"/>
    <property type="match status" value="1"/>
</dbReference>
<dbReference type="CDD" id="cd12113">
    <property type="entry name" value="PHP_PolIIIA_DnaE3"/>
    <property type="match status" value="1"/>
</dbReference>
<dbReference type="FunFam" id="1.10.150.870:FF:000001">
    <property type="entry name" value="DNA polymerase III subunit alpha"/>
    <property type="match status" value="1"/>
</dbReference>
<dbReference type="FunFam" id="3.20.20.140:FF:000049">
    <property type="entry name" value="DNA polymerase III subunit alpha"/>
    <property type="match status" value="1"/>
</dbReference>
<dbReference type="Gene3D" id="1.10.150.870">
    <property type="match status" value="1"/>
</dbReference>
<dbReference type="Gene3D" id="1.10.10.1600">
    <property type="entry name" value="Bacterial DNA polymerase III alpha subunit, thumb domain"/>
    <property type="match status" value="1"/>
</dbReference>
<dbReference type="Gene3D" id="3.20.20.140">
    <property type="entry name" value="Metal-dependent hydrolases"/>
    <property type="match status" value="1"/>
</dbReference>
<dbReference type="InterPro" id="IPR011708">
    <property type="entry name" value="DNA_pol3_alpha_NTPase_dom"/>
</dbReference>
<dbReference type="InterPro" id="IPR041931">
    <property type="entry name" value="DNA_pol3_alpha_thumb_dom"/>
</dbReference>
<dbReference type="InterPro" id="IPR040982">
    <property type="entry name" value="DNA_pol3_finger"/>
</dbReference>
<dbReference type="InterPro" id="IPR004805">
    <property type="entry name" value="DnaE2/DnaE/PolC"/>
</dbReference>
<dbReference type="InterPro" id="IPR029460">
    <property type="entry name" value="DNAPol_HHH"/>
</dbReference>
<dbReference type="InterPro" id="IPR004365">
    <property type="entry name" value="NA-bd_OB_tRNA"/>
</dbReference>
<dbReference type="InterPro" id="IPR004013">
    <property type="entry name" value="PHP_dom"/>
</dbReference>
<dbReference type="InterPro" id="IPR003141">
    <property type="entry name" value="Pol/His_phosphatase_N"/>
</dbReference>
<dbReference type="InterPro" id="IPR016195">
    <property type="entry name" value="Pol/histidinol_Pase-like"/>
</dbReference>
<dbReference type="NCBIfam" id="TIGR00594">
    <property type="entry name" value="polc"/>
    <property type="match status" value="1"/>
</dbReference>
<dbReference type="NCBIfam" id="NF004226">
    <property type="entry name" value="PRK05673.1"/>
    <property type="match status" value="1"/>
</dbReference>
<dbReference type="PANTHER" id="PTHR32294">
    <property type="entry name" value="DNA POLYMERASE III SUBUNIT ALPHA"/>
    <property type="match status" value="1"/>
</dbReference>
<dbReference type="PANTHER" id="PTHR32294:SF0">
    <property type="entry name" value="DNA POLYMERASE III SUBUNIT ALPHA"/>
    <property type="match status" value="1"/>
</dbReference>
<dbReference type="Pfam" id="PF07733">
    <property type="entry name" value="DNA_pol3_alpha"/>
    <property type="match status" value="1"/>
</dbReference>
<dbReference type="Pfam" id="PF17657">
    <property type="entry name" value="DNA_pol3_finger"/>
    <property type="match status" value="1"/>
</dbReference>
<dbReference type="Pfam" id="PF14579">
    <property type="entry name" value="HHH_6"/>
    <property type="match status" value="1"/>
</dbReference>
<dbReference type="Pfam" id="PF02811">
    <property type="entry name" value="PHP"/>
    <property type="match status" value="1"/>
</dbReference>
<dbReference type="Pfam" id="PF01336">
    <property type="entry name" value="tRNA_anti-codon"/>
    <property type="match status" value="1"/>
</dbReference>
<dbReference type="SMART" id="SM00481">
    <property type="entry name" value="POLIIIAc"/>
    <property type="match status" value="1"/>
</dbReference>
<dbReference type="SUPFAM" id="SSF89550">
    <property type="entry name" value="PHP domain-like"/>
    <property type="match status" value="1"/>
</dbReference>
<accession>P9WNT6</accession>
<accession>L0T6Z6</accession>
<accession>P63977</accession>
<accession>Q10779</accession>
<organism>
    <name type="scientific">Mycobacterium tuberculosis (strain CDC 1551 / Oshkosh)</name>
    <dbReference type="NCBI Taxonomy" id="83331"/>
    <lineage>
        <taxon>Bacteria</taxon>
        <taxon>Bacillati</taxon>
        <taxon>Actinomycetota</taxon>
        <taxon>Actinomycetes</taxon>
        <taxon>Mycobacteriales</taxon>
        <taxon>Mycobacteriaceae</taxon>
        <taxon>Mycobacterium</taxon>
        <taxon>Mycobacterium tuberculosis complex</taxon>
    </lineage>
</organism>